<comment type="function">
    <text evidence="2">Effector proteins function to alter host cell physiology and promote bacterial survival in host tissues. This protein is an E3 ubiquitin ligase that interferes with host's ubiquitination pathway. For instance, prevents host innate immune response by ubiquitinating and thus sending to degradation host E3 ubiquitin ligases TRIM56 and TRIM65.</text>
</comment>
<comment type="catalytic activity">
    <reaction>
        <text>S-ubiquitinyl-[E2 ubiquitin-conjugating enzyme]-L-cysteine + [acceptor protein]-L-lysine = [E2 ubiquitin-conjugating enzyme]-L-cysteine + N(6)-ubiquitinyl-[acceptor protein]-L-lysine.</text>
        <dbReference type="EC" id="2.3.2.26"/>
    </reaction>
</comment>
<comment type="subcellular location">
    <subcellularLocation>
        <location evidence="2">Secreted</location>
    </subcellularLocation>
    <subcellularLocation>
        <location evidence="2">Host cell</location>
    </subcellularLocation>
    <text evidence="2">Secreted via type III secretion system 1 (SPI-1 T3SS), and delivered into the host cell.</text>
</comment>
<comment type="PTM">
    <text evidence="2">Ubiquitinated in the presence of host E1 ubiquitin-activating enzyme, E2 ubiquitin-conjugating enzyme and ubiquitin.</text>
</comment>
<comment type="similarity">
    <text evidence="4">Belongs to the SopA E3 ligase family.</text>
</comment>
<evidence type="ECO:0000250" key="1"/>
<evidence type="ECO:0000250" key="2">
    <source>
        <dbReference type="UniProtKB" id="Q8ZNR3"/>
    </source>
</evidence>
<evidence type="ECO:0000256" key="3">
    <source>
        <dbReference type="SAM" id="MobiDB-lite"/>
    </source>
</evidence>
<evidence type="ECO:0000305" key="4"/>
<dbReference type="EC" id="2.3.2.26"/>
<dbReference type="EMBL" id="CP001363">
    <property type="protein sequence ID" value="ACY89002.1"/>
    <property type="molecule type" value="Genomic_DNA"/>
</dbReference>
<dbReference type="RefSeq" id="WP_000703998.1">
    <property type="nucleotide sequence ID" value="NZ_CP043402.1"/>
</dbReference>
<dbReference type="SMR" id="D0ZMG9"/>
<dbReference type="KEGG" id="seo:STM14_2557"/>
<dbReference type="PATRIC" id="fig|588858.6.peg.2391"/>
<dbReference type="HOGENOM" id="CLU_026158_0_0_6"/>
<dbReference type="BioCyc" id="SENT588858:STM14_RS11535-MONOMER"/>
<dbReference type="PHI-base" id="PHI:3737"/>
<dbReference type="Proteomes" id="UP000002695">
    <property type="component" value="Chromosome"/>
</dbReference>
<dbReference type="GO" id="GO:0005576">
    <property type="term" value="C:extracellular region"/>
    <property type="evidence" value="ECO:0000250"/>
    <property type="project" value="UniProtKB"/>
</dbReference>
<dbReference type="GO" id="GO:0043657">
    <property type="term" value="C:host cell"/>
    <property type="evidence" value="ECO:0007669"/>
    <property type="project" value="UniProtKB-SubCell"/>
</dbReference>
<dbReference type="GO" id="GO:0004842">
    <property type="term" value="F:ubiquitin-protein transferase activity"/>
    <property type="evidence" value="ECO:0000250"/>
    <property type="project" value="UniProtKB"/>
</dbReference>
<dbReference type="GO" id="GO:0016567">
    <property type="term" value="P:protein ubiquitination"/>
    <property type="evidence" value="ECO:0000250"/>
    <property type="project" value="UniProtKB"/>
</dbReference>
<dbReference type="FunFam" id="1.25.40.300:FF:000001">
    <property type="entry name" value="SPI-1 type III secretion system effector HECT-type E3 ubiquitin transferase SopA"/>
    <property type="match status" value="1"/>
</dbReference>
<dbReference type="FunFam" id="2.160.20.80:FF:000005">
    <property type="entry name" value="SPI-1 type III secretion system effector HECT-type E3 ubiquitin transferase SopA"/>
    <property type="match status" value="1"/>
</dbReference>
<dbReference type="Gene3D" id="2.160.20.80">
    <property type="entry name" value="E3 ubiquitin-protein ligase SopA"/>
    <property type="match status" value="1"/>
</dbReference>
<dbReference type="Gene3D" id="1.10.4140.10">
    <property type="entry name" value="effector protein (NleL)"/>
    <property type="match status" value="1"/>
</dbReference>
<dbReference type="Gene3D" id="3.40.1850.10">
    <property type="entry name" value="HECT-like ubiquitin ligase"/>
    <property type="match status" value="1"/>
</dbReference>
<dbReference type="Gene3D" id="1.25.40.300">
    <property type="entry name" value="Putative secreted effector protein"/>
    <property type="match status" value="1"/>
</dbReference>
<dbReference type="InterPro" id="IPR025725">
    <property type="entry name" value="SopA-like_cat"/>
</dbReference>
<dbReference type="InterPro" id="IPR038270">
    <property type="entry name" value="SopA-like_catalytic_sf"/>
</dbReference>
<dbReference type="InterPro" id="IPR025726">
    <property type="entry name" value="SopA-like_central"/>
</dbReference>
<dbReference type="NCBIfam" id="NF011904">
    <property type="entry name" value="PRK15377.1"/>
    <property type="match status" value="1"/>
</dbReference>
<dbReference type="Pfam" id="PF13981">
    <property type="entry name" value="SopA"/>
    <property type="match status" value="1"/>
</dbReference>
<dbReference type="Pfam" id="PF13979">
    <property type="entry name" value="SopA_C"/>
    <property type="match status" value="1"/>
</dbReference>
<dbReference type="SUPFAM" id="SSF141571">
    <property type="entry name" value="Pentapeptide repeat-like"/>
    <property type="match status" value="1"/>
</dbReference>
<accession>D0ZMG9</accession>
<protein>
    <recommendedName>
        <fullName>E3 ubiquitin-protein ligase SopA</fullName>
        <ecNumber>2.3.2.26</ecNumber>
    </recommendedName>
    <alternativeName>
        <fullName evidence="4">HECT-type E3 ubiquitin transferase SopA</fullName>
    </alternativeName>
    <alternativeName>
        <fullName>Salmonella outer protein A</fullName>
    </alternativeName>
    <alternativeName>
        <fullName>Secreted effector protein SopA</fullName>
    </alternativeName>
</protein>
<organism>
    <name type="scientific">Salmonella typhimurium (strain 14028s / SGSC 2262)</name>
    <dbReference type="NCBI Taxonomy" id="588858"/>
    <lineage>
        <taxon>Bacteria</taxon>
        <taxon>Pseudomonadati</taxon>
        <taxon>Pseudomonadota</taxon>
        <taxon>Gammaproteobacteria</taxon>
        <taxon>Enterobacterales</taxon>
        <taxon>Enterobacteriaceae</taxon>
        <taxon>Salmonella</taxon>
    </lineage>
</organism>
<name>SOPA_SALT1</name>
<proteinExistence type="inferred from homology"/>
<feature type="chain" id="PRO_0000395856" description="E3 ubiquitin-protein ligase SopA">
    <location>
        <begin position="1"/>
        <end position="782"/>
    </location>
</feature>
<feature type="region of interest" description="Disordered" evidence="3">
    <location>
        <begin position="137"/>
        <end position="171"/>
    </location>
</feature>
<feature type="compositionally biased region" description="Low complexity" evidence="3">
    <location>
        <begin position="157"/>
        <end position="171"/>
    </location>
</feature>
<feature type="active site" description="Glycyl thioester intermediate" evidence="1">
    <location>
        <position position="753"/>
    </location>
</feature>
<gene>
    <name type="primary">sopA</name>
    <name type="ordered locus">STM14_2557</name>
</gene>
<keyword id="KW-0964">Secreted</keyword>
<keyword id="KW-0808">Transferase</keyword>
<keyword id="KW-0832">Ubl conjugation</keyword>
<keyword id="KW-0833">Ubl conjugation pathway</keyword>
<keyword id="KW-0843">Virulence</keyword>
<sequence length="782" mass="86783">MKISSGAINFSTIPNQVKKLITSIREHTKNGLTSKITSVKNTHTSLNEKFKTGKDSPIEFALPQKIKDFFQPKDKNTLNKTLITVKNIKDTNNAGKKNISAEDVSKMNAAFMRKHIANQTCDYNYRMTGAAPLPGGVSVSANNRPTVSEGRTPPVSPSLSLQATSSPSSPADWAKKLTDAVLRQKAGETLTAADRDFSNADFRNITFSKILPPSFMERDGDIIKGFNFSNSKFTYSDISHLHFDECRFTYSTLSDVVCSNTKFSNSDMNEVFLQYSITTQQQPSFIDTTLKNTLIRHKANLSGVILNEPDNSSPPSVSGGGNFIRLGDIWLQMPLLWTENAVDGFLNHEHNNGKSILMTIDSLPDKYSQEKVQAMEDLVKSLRGGRLTEACIRPVESSLVSVLAHPPYTQSALISEWLGPVQERFFAHQCQTYNDVPLPAPDTYYQQRILPVLLDSFDRNSAAMTTHSGLFNQVILHCMTGVDCTDGTRQKAAALYEQYLAHPAVSPHIHNGLFGNYDGSPDWTTRAADNFLLLSSQDSDTAMMLSTDTLLTMLNPTPDTAWDNFYLLRAGENVSTAQISPVELFRHDFPVFLAAFNQQATQRRFGELIDIILSTEEHGELNQQFLAATNQKHSTVKLIDDASVSRLATIFDPLLPEGKLSPAHYQHILSAYHLTDATPQKQAETLFCLSTAFARYSSSAIFGTEHDSPPALRGYAEALMQKAWELSPAIFPSSEQFTEWSDRFHGLHGAFTCTSVVADSMQRHARKYFPSVLSSILPLAWA</sequence>
<reference key="1">
    <citation type="journal article" date="2010" name="J. Bacteriol.">
        <title>Short-term signatures of evolutionary change in the Salmonella enterica serovar typhimurium 14028 genome.</title>
        <authorList>
            <person name="Jarvik T."/>
            <person name="Smillie C."/>
            <person name="Groisman E.A."/>
            <person name="Ochman H."/>
        </authorList>
    </citation>
    <scope>NUCLEOTIDE SEQUENCE [LARGE SCALE GENOMIC DNA]</scope>
    <source>
        <strain>14028s / SGSC 2262</strain>
    </source>
</reference>